<dbReference type="EMBL" id="BX936398">
    <property type="protein sequence ID" value="CAH20574.1"/>
    <property type="molecule type" value="Genomic_DNA"/>
</dbReference>
<dbReference type="RefSeq" id="WP_002208794.1">
    <property type="nucleotide sequence ID" value="NZ_CP009712.1"/>
</dbReference>
<dbReference type="SMR" id="P0C873"/>
<dbReference type="GeneID" id="57977435"/>
<dbReference type="KEGG" id="ypo:BZ17_1187"/>
<dbReference type="KEGG" id="yps:YPTB1334"/>
<dbReference type="PATRIC" id="fig|273123.14.peg.1267"/>
<dbReference type="Proteomes" id="UP000001011">
    <property type="component" value="Chromosome"/>
</dbReference>
<dbReference type="GO" id="GO:0009289">
    <property type="term" value="C:pilus"/>
    <property type="evidence" value="ECO:0007669"/>
    <property type="project" value="UniProtKB-SubCell"/>
</dbReference>
<dbReference type="CDD" id="cd18777">
    <property type="entry name" value="PsaA_MyfA"/>
    <property type="match status" value="1"/>
</dbReference>
<dbReference type="Gene3D" id="2.60.40.3590">
    <property type="match status" value="2"/>
</dbReference>
<dbReference type="InterPro" id="IPR053731">
    <property type="entry name" value="Fimbrial_Virulence_Factor"/>
</dbReference>
<dbReference type="InterPro" id="IPR048725">
    <property type="entry name" value="MyfA_PsaA"/>
</dbReference>
<dbReference type="NCBIfam" id="NF037938">
    <property type="entry name" value="Myr_Ysa_major"/>
    <property type="match status" value="1"/>
</dbReference>
<dbReference type="Pfam" id="PF21462">
    <property type="entry name" value="PsaS"/>
    <property type="match status" value="1"/>
</dbReference>
<dbReference type="PROSITE" id="PS51257">
    <property type="entry name" value="PROKAR_LIPOPROTEIN"/>
    <property type="match status" value="1"/>
</dbReference>
<reference key="1">
    <citation type="journal article" date="2004" name="Proc. Natl. Acad. Sci. U.S.A.">
        <title>Insights into the evolution of Yersinia pestis through whole-genome comparison with Yersinia pseudotuberculosis.</title>
        <authorList>
            <person name="Chain P.S.G."/>
            <person name="Carniel E."/>
            <person name="Larimer F.W."/>
            <person name="Lamerdin J."/>
            <person name="Stoutland P.O."/>
            <person name="Regala W.M."/>
            <person name="Georgescu A.M."/>
            <person name="Vergez L.M."/>
            <person name="Land M.L."/>
            <person name="Motin V.L."/>
            <person name="Brubaker R.R."/>
            <person name="Fowler J."/>
            <person name="Hinnebusch J."/>
            <person name="Marceau M."/>
            <person name="Medigue C."/>
            <person name="Simonet M."/>
            <person name="Chenal-Francisque V."/>
            <person name="Souza B."/>
            <person name="Dacheux D."/>
            <person name="Elliott J.M."/>
            <person name="Derbise A."/>
            <person name="Hauser L.J."/>
            <person name="Garcia E."/>
        </authorList>
    </citation>
    <scope>NUCLEOTIDE SEQUENCE [LARGE SCALE GENOMIC DNA]</scope>
    <source>
        <strain>IP32953</strain>
    </source>
</reference>
<evidence type="ECO:0000250" key="1"/>
<evidence type="ECO:0000255" key="2">
    <source>
        <dbReference type="PROSITE-ProRule" id="PRU00303"/>
    </source>
</evidence>
<protein>
    <recommendedName>
        <fullName>pH 6 antigen</fullName>
    </recommendedName>
    <alternativeName>
        <fullName>Adhesin</fullName>
    </alternativeName>
    <alternativeName>
        <fullName>Antigen 4</fullName>
    </alternativeName>
</protein>
<sequence>MKMKCFAKNALAVTTLMIAACGMANASTVINSKDVSGEVTVKQGNTFHVDFAPNTGEIFAGKQPGDVTMFTLTMGDTAPHGGWRLIPTGDSKGGYMISADGDYVGLYSYMMSWVGIDNNWYINDDSPKDIKDHLYVKAGTVLKPTTYKFTGRVEEYVF</sequence>
<name>PSAA_YERPS</name>
<organism>
    <name type="scientific">Yersinia pseudotuberculosis serotype I (strain IP32953)</name>
    <dbReference type="NCBI Taxonomy" id="273123"/>
    <lineage>
        <taxon>Bacteria</taxon>
        <taxon>Pseudomonadati</taxon>
        <taxon>Pseudomonadota</taxon>
        <taxon>Gammaproteobacteria</taxon>
        <taxon>Enterobacterales</taxon>
        <taxon>Yersiniaceae</taxon>
        <taxon>Yersinia</taxon>
    </lineage>
</organism>
<proteinExistence type="inferred from homology"/>
<comment type="function">
    <text evidence="1">Fibrillar structure, part of fimbriae, necessary for full virulence.</text>
</comment>
<comment type="subunit">
    <text evidence="1">Forms a homomer composed of subunits assembled in a large structure.</text>
</comment>
<comment type="subcellular location">
    <subcellularLocation>
        <location evidence="1">Fimbrium</location>
    </subcellularLocation>
</comment>
<gene>
    <name type="primary">psaA</name>
    <name type="ordered locus">YPTB1334</name>
</gene>
<feature type="signal peptide" evidence="2">
    <location>
        <begin position="1"/>
        <end position="26"/>
    </location>
</feature>
<feature type="chain" id="PRO_0000009241" description="pH 6 antigen">
    <location>
        <begin position="27"/>
        <end position="158"/>
    </location>
</feature>
<accession>P0C873</accession>
<accession>Q56982</accession>
<accession>Q66CR8</accession>
<keyword id="KW-0281">Fimbrium</keyword>
<keyword id="KW-0732">Signal</keyword>
<keyword id="KW-0843">Virulence</keyword>